<protein>
    <recommendedName>
        <fullName evidence="1">Elongation factor P</fullName>
        <shortName evidence="1">EF-P</shortName>
    </recommendedName>
</protein>
<organism>
    <name type="scientific">Pasteurella multocida (strain Pm70)</name>
    <dbReference type="NCBI Taxonomy" id="272843"/>
    <lineage>
        <taxon>Bacteria</taxon>
        <taxon>Pseudomonadati</taxon>
        <taxon>Pseudomonadota</taxon>
        <taxon>Gammaproteobacteria</taxon>
        <taxon>Pasteurellales</taxon>
        <taxon>Pasteurellaceae</taxon>
        <taxon>Pasteurella</taxon>
    </lineage>
</organism>
<accession>P57811</accession>
<reference key="1">
    <citation type="journal article" date="2001" name="Proc. Natl. Acad. Sci. U.S.A.">
        <title>Complete genomic sequence of Pasteurella multocida Pm70.</title>
        <authorList>
            <person name="May B.J."/>
            <person name="Zhang Q."/>
            <person name="Li L.L."/>
            <person name="Paustian M.L."/>
            <person name="Whittam T.S."/>
            <person name="Kapur V."/>
        </authorList>
    </citation>
    <scope>NUCLEOTIDE SEQUENCE [LARGE SCALE GENOMIC DNA]</scope>
    <source>
        <strain>Pm70</strain>
    </source>
</reference>
<keyword id="KW-0963">Cytoplasm</keyword>
<keyword id="KW-0251">Elongation factor</keyword>
<keyword id="KW-0379">Hydroxylation</keyword>
<keyword id="KW-0648">Protein biosynthesis</keyword>
<keyword id="KW-1185">Reference proteome</keyword>
<evidence type="ECO:0000255" key="1">
    <source>
        <dbReference type="HAMAP-Rule" id="MF_00141"/>
    </source>
</evidence>
<sequence>MATYTTSDFKPGLKFMQDGEPCVIVENEFVKPGKGQAFTRTRIRKLISGKVLDVNFKSGTSVEAADVMDLNLTYSYKDDAFWYFMHPETFEQYSADAKAIGDAEKWLLDQADCIVTLWNGAPISVTPPNFVELEIIDTDPGLKGDTAGTGGKPATLSTGAVVKVPLFVQIGEVIKVDTRSGEYVSRVK</sequence>
<dbReference type="EMBL" id="AE004439">
    <property type="protein sequence ID" value="AAK02184.1"/>
    <property type="molecule type" value="Genomic_DNA"/>
</dbReference>
<dbReference type="RefSeq" id="WP_005719907.1">
    <property type="nucleotide sequence ID" value="NC_002663.1"/>
</dbReference>
<dbReference type="SMR" id="P57811"/>
<dbReference type="STRING" id="272843.PM0100"/>
<dbReference type="EnsemblBacteria" id="AAK02184">
    <property type="protein sequence ID" value="AAK02184"/>
    <property type="gene ID" value="PM0100"/>
</dbReference>
<dbReference type="GeneID" id="77207447"/>
<dbReference type="KEGG" id="pmu:PM0100"/>
<dbReference type="HOGENOM" id="CLU_074944_0_0_6"/>
<dbReference type="OrthoDB" id="9801844at2"/>
<dbReference type="UniPathway" id="UPA00345"/>
<dbReference type="Proteomes" id="UP000000809">
    <property type="component" value="Chromosome"/>
</dbReference>
<dbReference type="GO" id="GO:0005737">
    <property type="term" value="C:cytoplasm"/>
    <property type="evidence" value="ECO:0007669"/>
    <property type="project" value="UniProtKB-SubCell"/>
</dbReference>
<dbReference type="GO" id="GO:0003746">
    <property type="term" value="F:translation elongation factor activity"/>
    <property type="evidence" value="ECO:0007669"/>
    <property type="project" value="UniProtKB-UniRule"/>
</dbReference>
<dbReference type="GO" id="GO:0043043">
    <property type="term" value="P:peptide biosynthetic process"/>
    <property type="evidence" value="ECO:0007669"/>
    <property type="project" value="InterPro"/>
</dbReference>
<dbReference type="CDD" id="cd04470">
    <property type="entry name" value="S1_EF-P_repeat_1"/>
    <property type="match status" value="1"/>
</dbReference>
<dbReference type="CDD" id="cd05794">
    <property type="entry name" value="S1_EF-P_repeat_2"/>
    <property type="match status" value="1"/>
</dbReference>
<dbReference type="FunFam" id="2.30.30.30:FF:000003">
    <property type="entry name" value="Elongation factor P"/>
    <property type="match status" value="1"/>
</dbReference>
<dbReference type="FunFam" id="2.40.50.140:FF:000004">
    <property type="entry name" value="Elongation factor P"/>
    <property type="match status" value="1"/>
</dbReference>
<dbReference type="FunFam" id="2.40.50.140:FF:000009">
    <property type="entry name" value="Elongation factor P"/>
    <property type="match status" value="1"/>
</dbReference>
<dbReference type="Gene3D" id="2.30.30.30">
    <property type="match status" value="1"/>
</dbReference>
<dbReference type="Gene3D" id="2.40.50.140">
    <property type="entry name" value="Nucleic acid-binding proteins"/>
    <property type="match status" value="2"/>
</dbReference>
<dbReference type="HAMAP" id="MF_00141">
    <property type="entry name" value="EF_P"/>
    <property type="match status" value="1"/>
</dbReference>
<dbReference type="InterPro" id="IPR015365">
    <property type="entry name" value="Elong-fact-P_C"/>
</dbReference>
<dbReference type="InterPro" id="IPR012340">
    <property type="entry name" value="NA-bd_OB-fold"/>
</dbReference>
<dbReference type="InterPro" id="IPR014722">
    <property type="entry name" value="Rib_uL2_dom2"/>
</dbReference>
<dbReference type="InterPro" id="IPR020599">
    <property type="entry name" value="Transl_elong_fac_P/YeiP"/>
</dbReference>
<dbReference type="InterPro" id="IPR013185">
    <property type="entry name" value="Transl_elong_KOW-like"/>
</dbReference>
<dbReference type="InterPro" id="IPR001059">
    <property type="entry name" value="Transl_elong_P/YeiP_cen"/>
</dbReference>
<dbReference type="InterPro" id="IPR013852">
    <property type="entry name" value="Transl_elong_P/YeiP_CS"/>
</dbReference>
<dbReference type="InterPro" id="IPR011768">
    <property type="entry name" value="Transl_elongation_fac_P"/>
</dbReference>
<dbReference type="InterPro" id="IPR008991">
    <property type="entry name" value="Translation_prot_SH3-like_sf"/>
</dbReference>
<dbReference type="NCBIfam" id="TIGR00038">
    <property type="entry name" value="efp"/>
    <property type="match status" value="1"/>
</dbReference>
<dbReference type="NCBIfam" id="NF001810">
    <property type="entry name" value="PRK00529.1"/>
    <property type="match status" value="1"/>
</dbReference>
<dbReference type="PANTHER" id="PTHR30053">
    <property type="entry name" value="ELONGATION FACTOR P"/>
    <property type="match status" value="1"/>
</dbReference>
<dbReference type="PANTHER" id="PTHR30053:SF12">
    <property type="entry name" value="ELONGATION FACTOR P (EF-P) FAMILY PROTEIN"/>
    <property type="match status" value="1"/>
</dbReference>
<dbReference type="Pfam" id="PF01132">
    <property type="entry name" value="EFP"/>
    <property type="match status" value="1"/>
</dbReference>
<dbReference type="Pfam" id="PF08207">
    <property type="entry name" value="EFP_N"/>
    <property type="match status" value="1"/>
</dbReference>
<dbReference type="Pfam" id="PF09285">
    <property type="entry name" value="Elong-fact-P_C"/>
    <property type="match status" value="1"/>
</dbReference>
<dbReference type="PIRSF" id="PIRSF005901">
    <property type="entry name" value="EF-P"/>
    <property type="match status" value="1"/>
</dbReference>
<dbReference type="SMART" id="SM01185">
    <property type="entry name" value="EFP"/>
    <property type="match status" value="1"/>
</dbReference>
<dbReference type="SMART" id="SM00841">
    <property type="entry name" value="Elong-fact-P_C"/>
    <property type="match status" value="1"/>
</dbReference>
<dbReference type="SUPFAM" id="SSF50249">
    <property type="entry name" value="Nucleic acid-binding proteins"/>
    <property type="match status" value="2"/>
</dbReference>
<dbReference type="SUPFAM" id="SSF50104">
    <property type="entry name" value="Translation proteins SH3-like domain"/>
    <property type="match status" value="1"/>
</dbReference>
<dbReference type="PROSITE" id="PS01275">
    <property type="entry name" value="EFP"/>
    <property type="match status" value="1"/>
</dbReference>
<feature type="chain" id="PRO_0000094302" description="Elongation factor P">
    <location>
        <begin position="1"/>
        <end position="188"/>
    </location>
</feature>
<feature type="modified residue" description="N6-(3,6-diaminohexanoyl)-5-hydroxylysine" evidence="1">
    <location>
        <position position="34"/>
    </location>
</feature>
<comment type="function">
    <text evidence="1">Involved in peptide bond synthesis. Alleviates ribosome stalling that occurs when 3 or more consecutive Pro residues or the sequence PPG is present in a protein, possibly by augmenting the peptidyl transferase activity of the ribosome. Modification of Lys-34 is required for alleviation.</text>
</comment>
<comment type="pathway">
    <text evidence="1">Protein biosynthesis; polypeptide chain elongation.</text>
</comment>
<comment type="subcellular location">
    <subcellularLocation>
        <location evidence="1">Cytoplasm</location>
    </subcellularLocation>
</comment>
<comment type="PTM">
    <text evidence="1">May be beta-lysylated on the epsilon-amino group of Lys-34 by the combined action of EpmA and EpmB, and then hydroxylated on the C5 position of the same residue by EpmC (if this protein is present). Lysylation is critical for the stimulatory effect of EF-P on peptide-bond formation. The lysylation moiety may extend toward the peptidyltransferase center and stabilize the terminal 3-CCA end of the tRNA. Hydroxylation of the C5 position on Lys-34 may allow additional potential stabilizing hydrogen-bond interactions with the P-tRNA.</text>
</comment>
<comment type="similarity">
    <text evidence="1">Belongs to the elongation factor P family.</text>
</comment>
<gene>
    <name evidence="1" type="primary">efp</name>
    <name type="ordered locus">PM0100</name>
</gene>
<proteinExistence type="inferred from homology"/>
<name>EFP_PASMU</name>